<proteinExistence type="inferred from homology"/>
<sequence length="110" mass="13029">MNRNNVIDSLFNIIEDRKDKPIEGSYTGYLFEKGLDKILKKVGEESSEVIIAAKNEDEEELIKEICDLTYHIMVLMVEKQIKLDDIEKELEKRRERICNKKNERKTIEKL</sequence>
<reference key="1">
    <citation type="journal article" date="2007" name="Genome Res.">
        <title>Genome sequence of a proteolytic (Group I) Clostridium botulinum strain Hall A and comparative analysis of the clostridial genomes.</title>
        <authorList>
            <person name="Sebaihia M."/>
            <person name="Peck M.W."/>
            <person name="Minton N.P."/>
            <person name="Thomson N.R."/>
            <person name="Holden M.T.G."/>
            <person name="Mitchell W.J."/>
            <person name="Carter A.T."/>
            <person name="Bentley S.D."/>
            <person name="Mason D.R."/>
            <person name="Crossman L."/>
            <person name="Paul C.J."/>
            <person name="Ivens A."/>
            <person name="Wells-Bennik M.H.J."/>
            <person name="Davis I.J."/>
            <person name="Cerdeno-Tarraga A.M."/>
            <person name="Churcher C."/>
            <person name="Quail M.A."/>
            <person name="Chillingworth T."/>
            <person name="Feltwell T."/>
            <person name="Fraser A."/>
            <person name="Goodhead I."/>
            <person name="Hance Z."/>
            <person name="Jagels K."/>
            <person name="Larke N."/>
            <person name="Maddison M."/>
            <person name="Moule S."/>
            <person name="Mungall K."/>
            <person name="Norbertczak H."/>
            <person name="Rabbinowitsch E."/>
            <person name="Sanders M."/>
            <person name="Simmonds M."/>
            <person name="White B."/>
            <person name="Whithead S."/>
            <person name="Parkhill J."/>
        </authorList>
    </citation>
    <scope>NUCLEOTIDE SEQUENCE [LARGE SCALE GENOMIC DNA]</scope>
    <source>
        <strain>Hall / ATCC 3502 / NCTC 13319 / Type A</strain>
    </source>
</reference>
<dbReference type="EC" id="3.6.1.31" evidence="1"/>
<dbReference type="EMBL" id="AM412317">
    <property type="protein sequence ID" value="CAL83113.1"/>
    <property type="molecule type" value="Genomic_DNA"/>
</dbReference>
<dbReference type="RefSeq" id="WP_011949117.1">
    <property type="nucleotide sequence ID" value="NC_009698.1"/>
</dbReference>
<dbReference type="RefSeq" id="YP_001254081.1">
    <property type="nucleotide sequence ID" value="NC_009495.1"/>
</dbReference>
<dbReference type="RefSeq" id="YP_008472687.1">
    <property type="nucleotide sequence ID" value="NC_009698.1"/>
</dbReference>
<dbReference type="SMR" id="A5I248"/>
<dbReference type="GeneID" id="5185829"/>
<dbReference type="KEGG" id="cbo:CBO1574"/>
<dbReference type="PATRIC" id="fig|413999.7.peg.1550"/>
<dbReference type="HOGENOM" id="CLU_123337_0_0_9"/>
<dbReference type="UniPathway" id="UPA00031">
    <property type="reaction ID" value="UER00007"/>
</dbReference>
<dbReference type="PRO" id="PR:A5I248"/>
<dbReference type="Proteomes" id="UP000001986">
    <property type="component" value="Chromosome"/>
</dbReference>
<dbReference type="GO" id="GO:0005737">
    <property type="term" value="C:cytoplasm"/>
    <property type="evidence" value="ECO:0007669"/>
    <property type="project" value="UniProtKB-SubCell"/>
</dbReference>
<dbReference type="GO" id="GO:0005524">
    <property type="term" value="F:ATP binding"/>
    <property type="evidence" value="ECO:0007669"/>
    <property type="project" value="UniProtKB-KW"/>
</dbReference>
<dbReference type="GO" id="GO:0004636">
    <property type="term" value="F:phosphoribosyl-ATP diphosphatase activity"/>
    <property type="evidence" value="ECO:0007669"/>
    <property type="project" value="UniProtKB-UniRule"/>
</dbReference>
<dbReference type="GO" id="GO:0000105">
    <property type="term" value="P:L-histidine biosynthetic process"/>
    <property type="evidence" value="ECO:0007669"/>
    <property type="project" value="UniProtKB-UniRule"/>
</dbReference>
<dbReference type="CDD" id="cd11534">
    <property type="entry name" value="NTP-PPase_HisIE_like"/>
    <property type="match status" value="1"/>
</dbReference>
<dbReference type="Gene3D" id="1.10.287.1080">
    <property type="entry name" value="MazG-like"/>
    <property type="match status" value="1"/>
</dbReference>
<dbReference type="HAMAP" id="MF_01020">
    <property type="entry name" value="HisE"/>
    <property type="match status" value="1"/>
</dbReference>
<dbReference type="InterPro" id="IPR008179">
    <property type="entry name" value="HisE"/>
</dbReference>
<dbReference type="InterPro" id="IPR021130">
    <property type="entry name" value="PRib-ATP_PPHydrolase-like"/>
</dbReference>
<dbReference type="NCBIfam" id="TIGR03188">
    <property type="entry name" value="histidine_hisI"/>
    <property type="match status" value="1"/>
</dbReference>
<dbReference type="PANTHER" id="PTHR42945">
    <property type="entry name" value="HISTIDINE BIOSYNTHESIS BIFUNCTIONAL PROTEIN"/>
    <property type="match status" value="1"/>
</dbReference>
<dbReference type="PANTHER" id="PTHR42945:SF9">
    <property type="entry name" value="HISTIDINE BIOSYNTHESIS BIFUNCTIONAL PROTEIN HISIE"/>
    <property type="match status" value="1"/>
</dbReference>
<dbReference type="Pfam" id="PF01503">
    <property type="entry name" value="PRA-PH"/>
    <property type="match status" value="1"/>
</dbReference>
<dbReference type="SUPFAM" id="SSF101386">
    <property type="entry name" value="all-alpha NTP pyrophosphatases"/>
    <property type="match status" value="1"/>
</dbReference>
<comment type="catalytic activity">
    <reaction evidence="1">
        <text>1-(5-phospho-beta-D-ribosyl)-ATP + H2O = 1-(5-phospho-beta-D-ribosyl)-5'-AMP + diphosphate + H(+)</text>
        <dbReference type="Rhea" id="RHEA:22828"/>
        <dbReference type="ChEBI" id="CHEBI:15377"/>
        <dbReference type="ChEBI" id="CHEBI:15378"/>
        <dbReference type="ChEBI" id="CHEBI:33019"/>
        <dbReference type="ChEBI" id="CHEBI:59457"/>
        <dbReference type="ChEBI" id="CHEBI:73183"/>
        <dbReference type="EC" id="3.6.1.31"/>
    </reaction>
</comment>
<comment type="pathway">
    <text evidence="1">Amino-acid biosynthesis; L-histidine biosynthesis; L-histidine from 5-phospho-alpha-D-ribose 1-diphosphate: step 2/9.</text>
</comment>
<comment type="subcellular location">
    <subcellularLocation>
        <location evidence="1">Cytoplasm</location>
    </subcellularLocation>
</comment>
<comment type="similarity">
    <text evidence="1">Belongs to the PRA-PH family.</text>
</comment>
<name>HIS2_CLOBH</name>
<organism>
    <name type="scientific">Clostridium botulinum (strain Hall / ATCC 3502 / NCTC 13319 / Type A)</name>
    <dbReference type="NCBI Taxonomy" id="441771"/>
    <lineage>
        <taxon>Bacteria</taxon>
        <taxon>Bacillati</taxon>
        <taxon>Bacillota</taxon>
        <taxon>Clostridia</taxon>
        <taxon>Eubacteriales</taxon>
        <taxon>Clostridiaceae</taxon>
        <taxon>Clostridium</taxon>
    </lineage>
</organism>
<feature type="chain" id="PRO_1000063336" description="Phosphoribosyl-ATP pyrophosphatase">
    <location>
        <begin position="1"/>
        <end position="110"/>
    </location>
</feature>
<evidence type="ECO:0000255" key="1">
    <source>
        <dbReference type="HAMAP-Rule" id="MF_01020"/>
    </source>
</evidence>
<gene>
    <name evidence="1" type="primary">hisE</name>
    <name type="ordered locus">CBO1574</name>
</gene>
<accession>A5I248</accession>
<protein>
    <recommendedName>
        <fullName evidence="1">Phosphoribosyl-ATP pyrophosphatase</fullName>
        <shortName evidence="1">PRA-PH</shortName>
        <ecNumber evidence="1">3.6.1.31</ecNumber>
    </recommendedName>
</protein>
<keyword id="KW-0028">Amino-acid biosynthesis</keyword>
<keyword id="KW-0067">ATP-binding</keyword>
<keyword id="KW-0963">Cytoplasm</keyword>
<keyword id="KW-0368">Histidine biosynthesis</keyword>
<keyword id="KW-0378">Hydrolase</keyword>
<keyword id="KW-0547">Nucleotide-binding</keyword>
<keyword id="KW-1185">Reference proteome</keyword>